<sequence>MSEAIIAKKAELVDVVAEKMKAAASIVVVDARGLTVEQDTVLRRELRGSEVEYKVIKNSILRRAAEKAGLEDLASVFVGPSAVAFSNEDVIAPAKILNDFSKNAEALEIKGGAIEGAVASKEEILALATLPNREGLLSMLLSVLQAPVRNVALAVKAVAESKEDAA</sequence>
<accession>C1CEU4</accession>
<feature type="chain" id="PRO_1000195568" description="Large ribosomal subunit protein uL10">
    <location>
        <begin position="1"/>
        <end position="166"/>
    </location>
</feature>
<keyword id="KW-0687">Ribonucleoprotein</keyword>
<keyword id="KW-0689">Ribosomal protein</keyword>
<keyword id="KW-0694">RNA-binding</keyword>
<keyword id="KW-0699">rRNA-binding</keyword>
<gene>
    <name evidence="1" type="primary">rplJ</name>
    <name type="ordered locus">SPJ_1255</name>
</gene>
<evidence type="ECO:0000255" key="1">
    <source>
        <dbReference type="HAMAP-Rule" id="MF_00362"/>
    </source>
</evidence>
<evidence type="ECO:0000305" key="2"/>
<reference key="1">
    <citation type="journal article" date="2010" name="Genome Biol.">
        <title>Structure and dynamics of the pan-genome of Streptococcus pneumoniae and closely related species.</title>
        <authorList>
            <person name="Donati C."/>
            <person name="Hiller N.L."/>
            <person name="Tettelin H."/>
            <person name="Muzzi A."/>
            <person name="Croucher N.J."/>
            <person name="Angiuoli S.V."/>
            <person name="Oggioni M."/>
            <person name="Dunning Hotopp J.C."/>
            <person name="Hu F.Z."/>
            <person name="Riley D.R."/>
            <person name="Covacci A."/>
            <person name="Mitchell T.J."/>
            <person name="Bentley S.D."/>
            <person name="Kilian M."/>
            <person name="Ehrlich G.D."/>
            <person name="Rappuoli R."/>
            <person name="Moxon E.R."/>
            <person name="Masignani V."/>
        </authorList>
    </citation>
    <scope>NUCLEOTIDE SEQUENCE [LARGE SCALE GENOMIC DNA]</scope>
    <source>
        <strain>JJA</strain>
    </source>
</reference>
<proteinExistence type="inferred from homology"/>
<dbReference type="EMBL" id="CP000919">
    <property type="protein sequence ID" value="ACO18081.1"/>
    <property type="molecule type" value="Genomic_DNA"/>
</dbReference>
<dbReference type="RefSeq" id="WP_001287278.1">
    <property type="nucleotide sequence ID" value="NC_012466.1"/>
</dbReference>
<dbReference type="SMR" id="C1CEU4"/>
<dbReference type="GeneID" id="45653385"/>
<dbReference type="KEGG" id="sjj:SPJ_1255"/>
<dbReference type="HOGENOM" id="CLU_092227_2_0_9"/>
<dbReference type="Proteomes" id="UP000002206">
    <property type="component" value="Chromosome"/>
</dbReference>
<dbReference type="GO" id="GO:0015934">
    <property type="term" value="C:large ribosomal subunit"/>
    <property type="evidence" value="ECO:0007669"/>
    <property type="project" value="InterPro"/>
</dbReference>
<dbReference type="GO" id="GO:0070180">
    <property type="term" value="F:large ribosomal subunit rRNA binding"/>
    <property type="evidence" value="ECO:0007669"/>
    <property type="project" value="UniProtKB-UniRule"/>
</dbReference>
<dbReference type="GO" id="GO:0003735">
    <property type="term" value="F:structural constituent of ribosome"/>
    <property type="evidence" value="ECO:0007669"/>
    <property type="project" value="InterPro"/>
</dbReference>
<dbReference type="GO" id="GO:0006412">
    <property type="term" value="P:translation"/>
    <property type="evidence" value="ECO:0007669"/>
    <property type="project" value="UniProtKB-UniRule"/>
</dbReference>
<dbReference type="CDD" id="cd05797">
    <property type="entry name" value="Ribosomal_L10"/>
    <property type="match status" value="1"/>
</dbReference>
<dbReference type="FunFam" id="3.30.70.1730:FF:000001">
    <property type="entry name" value="50S ribosomal protein L10"/>
    <property type="match status" value="1"/>
</dbReference>
<dbReference type="Gene3D" id="3.30.70.1730">
    <property type="match status" value="1"/>
</dbReference>
<dbReference type="HAMAP" id="MF_00362">
    <property type="entry name" value="Ribosomal_uL10"/>
    <property type="match status" value="1"/>
</dbReference>
<dbReference type="InterPro" id="IPR001790">
    <property type="entry name" value="Ribosomal_uL10"/>
</dbReference>
<dbReference type="InterPro" id="IPR043141">
    <property type="entry name" value="Ribosomal_uL10-like_sf"/>
</dbReference>
<dbReference type="InterPro" id="IPR022973">
    <property type="entry name" value="Ribosomal_uL10_bac"/>
</dbReference>
<dbReference type="InterPro" id="IPR047865">
    <property type="entry name" value="Ribosomal_uL10_bac_type"/>
</dbReference>
<dbReference type="InterPro" id="IPR002363">
    <property type="entry name" value="Ribosomal_uL10_CS_bac"/>
</dbReference>
<dbReference type="NCBIfam" id="NF000955">
    <property type="entry name" value="PRK00099.1-1"/>
    <property type="match status" value="1"/>
</dbReference>
<dbReference type="PANTHER" id="PTHR11560">
    <property type="entry name" value="39S RIBOSOMAL PROTEIN L10, MITOCHONDRIAL"/>
    <property type="match status" value="1"/>
</dbReference>
<dbReference type="Pfam" id="PF00466">
    <property type="entry name" value="Ribosomal_L10"/>
    <property type="match status" value="1"/>
</dbReference>
<dbReference type="SUPFAM" id="SSF160369">
    <property type="entry name" value="Ribosomal protein L10-like"/>
    <property type="match status" value="1"/>
</dbReference>
<dbReference type="PROSITE" id="PS01109">
    <property type="entry name" value="RIBOSOMAL_L10"/>
    <property type="match status" value="1"/>
</dbReference>
<organism>
    <name type="scientific">Streptococcus pneumoniae (strain JJA)</name>
    <dbReference type="NCBI Taxonomy" id="488222"/>
    <lineage>
        <taxon>Bacteria</taxon>
        <taxon>Bacillati</taxon>
        <taxon>Bacillota</taxon>
        <taxon>Bacilli</taxon>
        <taxon>Lactobacillales</taxon>
        <taxon>Streptococcaceae</taxon>
        <taxon>Streptococcus</taxon>
    </lineage>
</organism>
<protein>
    <recommendedName>
        <fullName evidence="1">Large ribosomal subunit protein uL10</fullName>
    </recommendedName>
    <alternativeName>
        <fullName evidence="2">50S ribosomal protein L10</fullName>
    </alternativeName>
</protein>
<comment type="function">
    <text evidence="1">Forms part of the ribosomal stalk, playing a central role in the interaction of the ribosome with GTP-bound translation factors.</text>
</comment>
<comment type="subunit">
    <text evidence="1">Part of the ribosomal stalk of the 50S ribosomal subunit. The N-terminus interacts with L11 and the large rRNA to form the base of the stalk. The C-terminus forms an elongated spine to which L12 dimers bind in a sequential fashion forming a multimeric L10(L12)X complex.</text>
</comment>
<comment type="similarity">
    <text evidence="1">Belongs to the universal ribosomal protein uL10 family.</text>
</comment>
<name>RL10_STRZJ</name>